<dbReference type="EMBL" id="BC109843">
    <property type="protein sequence ID" value="AAI09844.1"/>
    <property type="molecule type" value="mRNA"/>
</dbReference>
<dbReference type="RefSeq" id="NP_001033659.1">
    <property type="nucleotide sequence ID" value="NM_001038570.1"/>
</dbReference>
<dbReference type="SMR" id="Q32KZ2"/>
<dbReference type="FunCoup" id="Q32KZ2">
    <property type="interactions" value="87"/>
</dbReference>
<dbReference type="STRING" id="9913.ENSBTAP00000025933"/>
<dbReference type="PaxDb" id="9913-ENSBTAP00000025933"/>
<dbReference type="Ensembl" id="ENSBTAT00000025933.4">
    <property type="protein sequence ID" value="ENSBTAP00000025933.3"/>
    <property type="gene ID" value="ENSBTAG00000019468.4"/>
</dbReference>
<dbReference type="GeneID" id="540296"/>
<dbReference type="KEGG" id="bta:540296"/>
<dbReference type="CTD" id="10881"/>
<dbReference type="VEuPathDB" id="HostDB:ENSBTAG00000019468"/>
<dbReference type="VGNC" id="VGNC:25577">
    <property type="gene designation" value="ACTL7A"/>
</dbReference>
<dbReference type="eggNOG" id="KOG0676">
    <property type="taxonomic scope" value="Eukaryota"/>
</dbReference>
<dbReference type="GeneTree" id="ENSGT00940000162158"/>
<dbReference type="HOGENOM" id="CLU_027965_0_2_1"/>
<dbReference type="InParanoid" id="Q32KZ2"/>
<dbReference type="OMA" id="DMWEYLF"/>
<dbReference type="OrthoDB" id="9925380at2759"/>
<dbReference type="TreeFam" id="TF354237"/>
<dbReference type="Proteomes" id="UP000009136">
    <property type="component" value="Chromosome 8"/>
</dbReference>
<dbReference type="Bgee" id="ENSBTAG00000019468">
    <property type="expression patterns" value="Expressed in semen and 18 other cell types or tissues"/>
</dbReference>
<dbReference type="GO" id="GO:0001669">
    <property type="term" value="C:acrosomal vesicle"/>
    <property type="evidence" value="ECO:0000250"/>
    <property type="project" value="UniProtKB"/>
</dbReference>
<dbReference type="GO" id="GO:0005737">
    <property type="term" value="C:cytoplasm"/>
    <property type="evidence" value="ECO:0000250"/>
    <property type="project" value="UniProtKB"/>
</dbReference>
<dbReference type="GO" id="GO:0005856">
    <property type="term" value="C:cytoskeleton"/>
    <property type="evidence" value="ECO:0007669"/>
    <property type="project" value="UniProtKB-SubCell"/>
</dbReference>
<dbReference type="GO" id="GO:0005794">
    <property type="term" value="C:Golgi apparatus"/>
    <property type="evidence" value="ECO:0007669"/>
    <property type="project" value="UniProtKB-SubCell"/>
</dbReference>
<dbReference type="GO" id="GO:0001673">
    <property type="term" value="C:male germ cell nucleus"/>
    <property type="evidence" value="ECO:0007669"/>
    <property type="project" value="Ensembl"/>
</dbReference>
<dbReference type="GO" id="GO:0031514">
    <property type="term" value="C:motile cilium"/>
    <property type="evidence" value="ECO:0007669"/>
    <property type="project" value="Ensembl"/>
</dbReference>
<dbReference type="GO" id="GO:0005634">
    <property type="term" value="C:nucleus"/>
    <property type="evidence" value="ECO:0000250"/>
    <property type="project" value="UniProtKB"/>
</dbReference>
<dbReference type="GO" id="GO:0032991">
    <property type="term" value="C:protein-containing complex"/>
    <property type="evidence" value="ECO:0007669"/>
    <property type="project" value="Ensembl"/>
</dbReference>
<dbReference type="GO" id="GO:0001675">
    <property type="term" value="P:acrosome assembly"/>
    <property type="evidence" value="ECO:0000250"/>
    <property type="project" value="UniProtKB"/>
</dbReference>
<dbReference type="GO" id="GO:0009566">
    <property type="term" value="P:fertilization"/>
    <property type="evidence" value="ECO:0000250"/>
    <property type="project" value="UniProtKB"/>
</dbReference>
<dbReference type="GO" id="GO:0007338">
    <property type="term" value="P:single fertilization"/>
    <property type="evidence" value="ECO:0007669"/>
    <property type="project" value="UniProtKB-KW"/>
</dbReference>
<dbReference type="GO" id="GO:0007286">
    <property type="term" value="P:spermatid development"/>
    <property type="evidence" value="ECO:0000250"/>
    <property type="project" value="UniProtKB"/>
</dbReference>
<dbReference type="CDD" id="cd10214">
    <property type="entry name" value="ASKHA_NBD_ACTL7"/>
    <property type="match status" value="1"/>
</dbReference>
<dbReference type="FunFam" id="3.90.640.10:FF:000007">
    <property type="entry name" value="Actin like 7B"/>
    <property type="match status" value="1"/>
</dbReference>
<dbReference type="FunFam" id="3.30.420.40:FF:000050">
    <property type="entry name" value="Actin, alpha skeletal muscle"/>
    <property type="match status" value="1"/>
</dbReference>
<dbReference type="Gene3D" id="3.30.420.40">
    <property type="match status" value="2"/>
</dbReference>
<dbReference type="Gene3D" id="3.90.640.10">
    <property type="entry name" value="Actin, Chain A, domain 4"/>
    <property type="match status" value="1"/>
</dbReference>
<dbReference type="InterPro" id="IPR004000">
    <property type="entry name" value="Actin"/>
</dbReference>
<dbReference type="InterPro" id="IPR031769">
    <property type="entry name" value="ACTL7A_N"/>
</dbReference>
<dbReference type="InterPro" id="IPR043129">
    <property type="entry name" value="ATPase_NBD"/>
</dbReference>
<dbReference type="PANTHER" id="PTHR11937">
    <property type="entry name" value="ACTIN"/>
    <property type="match status" value="1"/>
</dbReference>
<dbReference type="Pfam" id="PF00022">
    <property type="entry name" value="Actin"/>
    <property type="match status" value="1"/>
</dbReference>
<dbReference type="Pfam" id="PF16840">
    <property type="entry name" value="ACTL7A_N"/>
    <property type="match status" value="1"/>
</dbReference>
<dbReference type="PRINTS" id="PR00190">
    <property type="entry name" value="ACTIN"/>
</dbReference>
<dbReference type="SMART" id="SM00268">
    <property type="entry name" value="ACTIN"/>
    <property type="match status" value="1"/>
</dbReference>
<dbReference type="SUPFAM" id="SSF53067">
    <property type="entry name" value="Actin-like ATPase domain"/>
    <property type="match status" value="2"/>
</dbReference>
<organism>
    <name type="scientific">Bos taurus</name>
    <name type="common">Bovine</name>
    <dbReference type="NCBI Taxonomy" id="9913"/>
    <lineage>
        <taxon>Eukaryota</taxon>
        <taxon>Metazoa</taxon>
        <taxon>Chordata</taxon>
        <taxon>Craniata</taxon>
        <taxon>Vertebrata</taxon>
        <taxon>Euteleostomi</taxon>
        <taxon>Mammalia</taxon>
        <taxon>Eutheria</taxon>
        <taxon>Laurasiatheria</taxon>
        <taxon>Artiodactyla</taxon>
        <taxon>Ruminantia</taxon>
        <taxon>Pecora</taxon>
        <taxon>Bovidae</taxon>
        <taxon>Bovinae</taxon>
        <taxon>Bos</taxon>
    </lineage>
</organism>
<gene>
    <name type="primary">ACTL7A</name>
</gene>
<sequence length="438" mass="49016">MALESVWAPQAAVIGDGLSERVGEQASPQTQVLQTASLKDGPAKRAVWVRRDHSEPEPTTSPEVKKPKLELTKAVVVDLGTGYCKCGFAGLPKPTHRISTTVGKPYMETAKTGDNRKETFVGHELINPEVRLKLINPLRHGIIVDWDTVQDIWEYLFHQEMKIAPEEHAVLVSDPPLSPHTNREKYAEMLFETFKTPAMHIAYQSRLSMYSYGRTSGLVVEVGHGVSYVVPIYEGYPLPSITGRLDYAGSDLTTYLMCLMNTAGKHFTEGQLGIVEDIKKKCCFVALDPIEEKKVPATEHMIQYTLPDGQAIYLCQERFLCSEMFFKPSLIKSMQLGLHTQTVSCLNKCDIALKRDLMGNILLCGGSTMLSGFPNRLQKELSSMCPNDTPQVSVLPERDTAVWTGGSILASLQGFQPLWVHRSEYEEHGPFFLYRRCF</sequence>
<accession>Q32KZ2</accession>
<name>ACL7A_BOVIN</name>
<proteinExistence type="evidence at transcript level"/>
<comment type="function">
    <text evidence="1">Essential for normal spermatogenesis and male fertility. Required for normal sperm head morphology, acroplaxome formation, acrosome attachment, and acrosome granule stability. May anchor and stabilize acrosomal adherence to the acroplaxome at least in part by facilitating the presence of F-actin in the subacrosomal space. May play an important role in formation and fusion of Golgi-derived vesicles during acrosome biogenesis.</text>
</comment>
<comment type="subunit">
    <text evidence="2">Interacts (via N-terminus) with TES (via LIM domain 2). Heterodimer with TES; the heterodimer interacts with ENAH to form a heterotrimer. Interacts with ACTL9. Interacts with CYLC1; the interaction may be relevant for proper acrosome attachment to the nuclear envelope (By similarity).</text>
</comment>
<comment type="subcellular location">
    <subcellularLocation>
        <location evidence="1">Cytoplasm</location>
        <location evidence="1">Cytoskeleton</location>
    </subcellularLocation>
    <subcellularLocation>
        <location evidence="1">Golgi apparatus</location>
    </subcellularLocation>
    <subcellularLocation>
        <location evidence="1">Cytoplasm</location>
    </subcellularLocation>
    <subcellularLocation>
        <location evidence="1">Nucleus</location>
    </subcellularLocation>
    <text evidence="1">Detected at the Golgi apparatus during acrosome biogenesis. Detected at the subacrosomal layer in round spermatids. Detected in sperm head and tail.</text>
</comment>
<comment type="similarity">
    <text evidence="3">Belongs to the actin family.</text>
</comment>
<feature type="chain" id="PRO_0000282828" description="Actin-like protein 7A">
    <location>
        <begin position="1"/>
        <end position="438"/>
    </location>
</feature>
<feature type="region of interest" description="Required for interaction with TES" evidence="2">
    <location>
        <begin position="36"/>
        <end position="56"/>
    </location>
</feature>
<evidence type="ECO:0000250" key="1">
    <source>
        <dbReference type="UniProtKB" id="Q9QY84"/>
    </source>
</evidence>
<evidence type="ECO:0000250" key="2">
    <source>
        <dbReference type="UniProtKB" id="Q9Y615"/>
    </source>
</evidence>
<evidence type="ECO:0000305" key="3"/>
<protein>
    <recommendedName>
        <fullName>Actin-like protein 7A</fullName>
    </recommendedName>
</protein>
<reference key="1">
    <citation type="submission" date="2005-11" db="EMBL/GenBank/DDBJ databases">
        <authorList>
            <consortium name="NIH - Mammalian Gene Collection (MGC) project"/>
        </authorList>
    </citation>
    <scope>NUCLEOTIDE SEQUENCE [LARGE SCALE MRNA]</scope>
    <source>
        <strain>Crossbred X Angus</strain>
        <tissue>Liver</tissue>
    </source>
</reference>
<keyword id="KW-0963">Cytoplasm</keyword>
<keyword id="KW-0206">Cytoskeleton</keyword>
<keyword id="KW-0221">Differentiation</keyword>
<keyword id="KW-0278">Fertilization</keyword>
<keyword id="KW-0333">Golgi apparatus</keyword>
<keyword id="KW-0539">Nucleus</keyword>
<keyword id="KW-1185">Reference proteome</keyword>
<keyword id="KW-0744">Spermatogenesis</keyword>